<sequence>MKTVYVTGYKSFELNIFKDDAPEVYYLKAFIKHKLLQYIDEGLEWVLIQGQLGIELWTAEVVIDLRVEYPDLKLGIITPFYGHTSKWNEQNQMKYNKIAQEADFMESVHHTEYEGPFQFKQTDQFMLDHTDMTILIYDEEQEGSPKFFKRMLVDFINKTNYTCDIVAFDELTDFINDMQWEQDQSFE</sequence>
<organism>
    <name type="scientific">Staphylococcus haemolyticus (strain JCSC1435)</name>
    <dbReference type="NCBI Taxonomy" id="279808"/>
    <lineage>
        <taxon>Bacteria</taxon>
        <taxon>Bacillati</taxon>
        <taxon>Bacillota</taxon>
        <taxon>Bacilli</taxon>
        <taxon>Bacillales</taxon>
        <taxon>Staphylococcaceae</taxon>
        <taxon>Staphylococcus</taxon>
    </lineage>
</organism>
<accession>Q4L6F1</accession>
<reference key="1">
    <citation type="journal article" date="2005" name="J. Bacteriol.">
        <title>Whole-genome sequencing of Staphylococcus haemolyticus uncovers the extreme plasticity of its genome and the evolution of human-colonizing staphylococcal species.</title>
        <authorList>
            <person name="Takeuchi F."/>
            <person name="Watanabe S."/>
            <person name="Baba T."/>
            <person name="Yuzawa H."/>
            <person name="Ito T."/>
            <person name="Morimoto Y."/>
            <person name="Kuroda M."/>
            <person name="Cui L."/>
            <person name="Takahashi M."/>
            <person name="Ankai A."/>
            <person name="Baba S."/>
            <person name="Fukui S."/>
            <person name="Lee J.C."/>
            <person name="Hiramatsu K."/>
        </authorList>
    </citation>
    <scope>NUCLEOTIDE SEQUENCE [LARGE SCALE GENOMIC DNA]</scope>
    <source>
        <strain>JCSC1435</strain>
    </source>
</reference>
<feature type="chain" id="PRO_0000267179" description="UPF0398 protein SH1465">
    <location>
        <begin position="1"/>
        <end position="187"/>
    </location>
</feature>
<proteinExistence type="inferred from homology"/>
<evidence type="ECO:0000255" key="1">
    <source>
        <dbReference type="HAMAP-Rule" id="MF_01575"/>
    </source>
</evidence>
<name>Y1465_STAHJ</name>
<gene>
    <name type="ordered locus">SH1465</name>
</gene>
<comment type="similarity">
    <text evidence="1">Belongs to the UPF0398 family.</text>
</comment>
<dbReference type="EMBL" id="AP006716">
    <property type="protein sequence ID" value="BAE04774.1"/>
    <property type="molecule type" value="Genomic_DNA"/>
</dbReference>
<dbReference type="RefSeq" id="WP_011275760.1">
    <property type="nucleotide sequence ID" value="NC_007168.1"/>
</dbReference>
<dbReference type="SMR" id="Q4L6F1"/>
<dbReference type="KEGG" id="sha:SH1465"/>
<dbReference type="eggNOG" id="COG4474">
    <property type="taxonomic scope" value="Bacteria"/>
</dbReference>
<dbReference type="HOGENOM" id="CLU_105319_0_0_9"/>
<dbReference type="OrthoDB" id="2301957at2"/>
<dbReference type="Proteomes" id="UP000000543">
    <property type="component" value="Chromosome"/>
</dbReference>
<dbReference type="Gene3D" id="3.40.50.450">
    <property type="match status" value="1"/>
</dbReference>
<dbReference type="HAMAP" id="MF_01575">
    <property type="entry name" value="UPF0398"/>
    <property type="match status" value="1"/>
</dbReference>
<dbReference type="InterPro" id="IPR010697">
    <property type="entry name" value="YspA"/>
</dbReference>
<dbReference type="NCBIfam" id="NF010181">
    <property type="entry name" value="PRK13660.1"/>
    <property type="match status" value="1"/>
</dbReference>
<dbReference type="PANTHER" id="PTHR38440:SF1">
    <property type="entry name" value="UPF0398 PROTEIN SPR0331"/>
    <property type="match status" value="1"/>
</dbReference>
<dbReference type="PANTHER" id="PTHR38440">
    <property type="entry name" value="UPF0398 PROTEIN YPSA"/>
    <property type="match status" value="1"/>
</dbReference>
<dbReference type="Pfam" id="PF06908">
    <property type="entry name" value="YpsA"/>
    <property type="match status" value="1"/>
</dbReference>
<dbReference type="PIRSF" id="PIRSF021290">
    <property type="entry name" value="DUF1273"/>
    <property type="match status" value="1"/>
</dbReference>
<dbReference type="SUPFAM" id="SSF102405">
    <property type="entry name" value="MCP/YpsA-like"/>
    <property type="match status" value="1"/>
</dbReference>
<protein>
    <recommendedName>
        <fullName evidence="1">UPF0398 protein SH1465</fullName>
    </recommendedName>
</protein>